<organism>
    <name type="scientific">Rotavirus A (strain RVA/Human/Indonesia/69M/1980/G8P4[10])</name>
    <name type="common">RV-A</name>
    <dbReference type="NCBI Taxonomy" id="10947"/>
    <lineage>
        <taxon>Viruses</taxon>
        <taxon>Riboviria</taxon>
        <taxon>Orthornavirae</taxon>
        <taxon>Duplornaviricota</taxon>
        <taxon>Resentoviricetes</taxon>
        <taxon>Reovirales</taxon>
        <taxon>Sedoreoviridae</taxon>
        <taxon>Rotavirus</taxon>
        <taxon>Rotavirus A</taxon>
    </lineage>
</organism>
<protein>
    <recommendedName>
        <fullName evidence="1">Non-structural protein 3</fullName>
        <shortName evidence="1">NSP3</shortName>
    </recommendedName>
    <alternativeName>
        <fullName evidence="1">NCVP4</fullName>
    </alternativeName>
    <alternativeName>
        <fullName evidence="1">Non-structural RNA-binding protein 34</fullName>
        <shortName evidence="1">NS34</shortName>
    </alternativeName>
</protein>
<proteinExistence type="evidence at transcript level"/>
<evidence type="ECO:0000255" key="1">
    <source>
        <dbReference type="HAMAP-Rule" id="MF_04094"/>
    </source>
</evidence>
<sequence length="313" mass="36493">MLKMESTQQMVSSIINSSFEAAVVAATSTLELMGIQYDYNEVYTRVKSKFDLVMDDSGVKNNLMGKAATIDQALNGKFSSSIRNRNWMTDSKTDARLDEDVNKLRLLLSSKGIDQKMRVLNACFNVKRIPGKSSSVIRCTRLMKEKIERGEVEVDDAFVEEKMEVDTIDWKSRYEQLEKRFESLKQRVNEKYNNWVIKARKDNENMYSLQNVISQQQAHINELQIYNNKLERDLQSKIGSVISSIEWYLRSMELSDDIKSDIEQQLNSIDQINPVNAYDDFESILRNLISDYDRMFIMFKGLLQQSNYIYTYE</sequence>
<keyword id="KW-0175">Coiled coil</keyword>
<keyword id="KW-1035">Host cytoplasm</keyword>
<keyword id="KW-0945">Host-virus interaction</keyword>
<keyword id="KW-0694">RNA-binding</keyword>
<keyword id="KW-0810">Translation regulation</keyword>
<reference key="1">
    <citation type="journal article" date="1995" name="Virology">
        <title>Comparative nucleotide and amino acid sequence analysis of the sequence-specific RNA-binding rotavirus nonstructural protein NSP3.</title>
        <authorList>
            <person name="Rao C.D."/>
            <person name="Das M."/>
            <person name="Ilango P."/>
            <person name="Lalwani R."/>
            <person name="Rao B.S."/>
            <person name="Gowda K."/>
        </authorList>
    </citation>
    <scope>NUCLEOTIDE SEQUENCE [MRNA]</scope>
</reference>
<reference key="2">
    <citation type="journal article" date="2008" name="J. Virol.">
        <title>Group A human rotavirus genomics: evidence that gene constellations are influenced by viral protein interactions.</title>
        <authorList>
            <person name="Heiman E.M."/>
            <person name="McDonald S.M."/>
            <person name="Barro M."/>
            <person name="Taraporewala Z.F."/>
            <person name="Bar-Magen T."/>
            <person name="Patton J.T."/>
        </authorList>
    </citation>
    <scope>NUCLEOTIDE SEQUENCE [GENOMIC DNA] OF 3-313</scope>
</reference>
<comment type="function">
    <text evidence="1">Plays an important role in stimulating the translation of viral mRNAs. These mRNAs are capped but not polyadenylated, instead terminating in a conserved sequence 'GACC' at the 3' that is recognized by NSP3, which competes with host PABPC1 for EIF4G1 binding. The interaction between NSP3 and host EIF4G1 stabilizes the EIF4E-EIF4G1 interaction, thereby facilitating the initiation of capped mRNA translation.</text>
</comment>
<comment type="subunit">
    <text evidence="1">Homodimer. Interacts (via the coiled-coil region) with host ZC3H7B (via LD motif). Interacts with host EIF4G1.</text>
</comment>
<comment type="subcellular location">
    <subcellularLocation>
        <location evidence="1">Host cytoplasm</location>
    </subcellularLocation>
</comment>
<comment type="similarity">
    <text evidence="1">Belongs to the rotavirus NSP3 family.</text>
</comment>
<dbReference type="EMBL" id="X81425">
    <property type="protein sequence ID" value="CAA57184.1"/>
    <property type="molecule type" value="mRNA"/>
</dbReference>
<dbReference type="EMBL" id="EF672558">
    <property type="protein sequence ID" value="ABV53230.1"/>
    <property type="molecule type" value="Genomic_DNA"/>
</dbReference>
<dbReference type="PIR" id="S51728">
    <property type="entry name" value="S51728"/>
</dbReference>
<dbReference type="SMR" id="Q82051"/>
<dbReference type="Proteomes" id="UP000001455">
    <property type="component" value="Genome"/>
</dbReference>
<dbReference type="GO" id="GO:0030430">
    <property type="term" value="C:host cell cytoplasm"/>
    <property type="evidence" value="ECO:0007669"/>
    <property type="project" value="UniProtKB-SubCell"/>
</dbReference>
<dbReference type="GO" id="GO:0003723">
    <property type="term" value="F:RNA binding"/>
    <property type="evidence" value="ECO:0007669"/>
    <property type="project" value="UniProtKB-UniRule"/>
</dbReference>
<dbReference type="GO" id="GO:0006417">
    <property type="term" value="P:regulation of translation"/>
    <property type="evidence" value="ECO:0007669"/>
    <property type="project" value="UniProtKB-UniRule"/>
</dbReference>
<dbReference type="CDD" id="cd20714">
    <property type="entry name" value="NSP3_rotavirus"/>
    <property type="match status" value="1"/>
</dbReference>
<dbReference type="Gene3D" id="3.30.70.1610">
    <property type="match status" value="1"/>
</dbReference>
<dbReference type="Gene3D" id="1.20.5.970">
    <property type="entry name" value="Nonstructural RNA-binding protein"/>
    <property type="match status" value="1"/>
</dbReference>
<dbReference type="Gene3D" id="6.10.280.20">
    <property type="entry name" value="Rotavirus non-structural protein NSP3, N-terminal domain"/>
    <property type="match status" value="1"/>
</dbReference>
<dbReference type="HAMAP" id="MF_04094">
    <property type="entry name" value="ROTA_A_NSP3"/>
    <property type="match status" value="1"/>
</dbReference>
<dbReference type="HAMAP" id="MF_04090">
    <property type="entry name" value="ROTA_NSP3"/>
    <property type="match status" value="1"/>
</dbReference>
<dbReference type="InterPro" id="IPR042519">
    <property type="entry name" value="NSP3_N_rotavirus"/>
</dbReference>
<dbReference type="InterPro" id="IPR036082">
    <property type="entry name" value="NSP3_sf"/>
</dbReference>
<dbReference type="InterPro" id="IPR002873">
    <property type="entry name" value="Rotavirus_NSP3"/>
</dbReference>
<dbReference type="Pfam" id="PF01665">
    <property type="entry name" value="Rota_NSP3"/>
    <property type="match status" value="1"/>
</dbReference>
<dbReference type="SUPFAM" id="SSF69903">
    <property type="entry name" value="NSP3 homodimer"/>
    <property type="match status" value="1"/>
</dbReference>
<dbReference type="SUPFAM" id="SSF58030">
    <property type="entry name" value="Rotavirus nonstructural proteins"/>
    <property type="match status" value="1"/>
</dbReference>
<name>NSP3_ROTH6</name>
<organismHost>
    <name type="scientific">Homo sapiens</name>
    <name type="common">Human</name>
    <dbReference type="NCBI Taxonomy" id="9606"/>
</organismHost>
<feature type="chain" id="PRO_0000369448" description="Non-structural protein 3">
    <location>
        <begin position="1"/>
        <end position="313"/>
    </location>
</feature>
<feature type="region of interest" description="RNA-binding" evidence="1">
    <location>
        <begin position="1"/>
        <end position="149"/>
    </location>
</feature>
<feature type="region of interest" description="Dimerization" evidence="1">
    <location>
        <begin position="150"/>
        <end position="206"/>
    </location>
</feature>
<feature type="region of interest" description="Interaction with host ZC3H7B" evidence="1">
    <location>
        <begin position="170"/>
        <end position="234"/>
    </location>
</feature>
<feature type="region of interest" description="Interaction with host EIF4G1" evidence="1">
    <location>
        <begin position="208"/>
        <end position="313"/>
    </location>
</feature>
<feature type="coiled-coil region" evidence="1">
    <location>
        <begin position="166"/>
        <end position="237"/>
    </location>
</feature>
<feature type="sequence conflict" description="In Ref. 2; ABV53230." ref="2">
    <original>R</original>
    <variation>K</variation>
    <location>
        <position position="45"/>
    </location>
</feature>
<feature type="sequence conflict" description="In Ref. 2; ABV53230." ref="2">
    <original>D</original>
    <variation>V</variation>
    <location>
        <position position="94"/>
    </location>
</feature>
<feature type="sequence conflict" description="In Ref. 2; ABV53230." ref="2">
    <original>D</original>
    <variation>V</variation>
    <location>
        <position position="202"/>
    </location>
</feature>
<feature type="sequence conflict" description="In Ref. 2; ABV53230." ref="2">
    <original>Y</original>
    <variation>N</variation>
    <location>
        <position position="207"/>
    </location>
</feature>
<feature type="sequence conflict" description="In Ref. 2; ABV53230." ref="2">
    <original>Y</original>
    <variation>F</variation>
    <location>
        <position position="278"/>
    </location>
</feature>
<accession>Q82051</accession>
<accession>B3SRQ5</accession>